<gene>
    <name evidence="2" type="primary">PA</name>
</gene>
<name>PA_I80A2</name>
<reference key="1">
    <citation type="journal article" date="2005" name="Proc. Natl. Acad. Sci. U.S.A.">
        <title>The viral polymerase mediates adaptation of an avian influenza virus to a mammalian host.</title>
        <authorList>
            <person name="Gabriel G."/>
            <person name="Dauber B."/>
            <person name="Wolff T."/>
            <person name="Planz O."/>
            <person name="Klenk H.D."/>
            <person name="Stech J."/>
        </authorList>
    </citation>
    <scope>NUCLEOTIDE SEQUENCE [GENOMIC RNA]</scope>
    <source>
        <strain>SC35M mouse-adapted</strain>
    </source>
</reference>
<protein>
    <recommendedName>
        <fullName evidence="2">Polymerase acidic protein</fullName>
        <ecNumber evidence="2">3.1.-.-</ecNumber>
    </recommendedName>
    <alternativeName>
        <fullName evidence="2">RNA-directed RNA polymerase subunit P2</fullName>
    </alternativeName>
</protein>
<organismHost>
    <name type="scientific">Aves</name>
    <dbReference type="NCBI Taxonomy" id="8782"/>
</organismHost>
<organismHost>
    <name type="scientific">Equus caballus</name>
    <name type="common">Horse</name>
    <dbReference type="NCBI Taxonomy" id="9796"/>
</organismHost>
<organismHost>
    <name type="scientific">Homo sapiens</name>
    <name type="common">Human</name>
    <dbReference type="NCBI Taxonomy" id="9606"/>
</organismHost>
<organismHost>
    <name type="scientific">Phocidae</name>
    <name type="common">true seals</name>
    <dbReference type="NCBI Taxonomy" id="9709"/>
</organismHost>
<dbReference type="EC" id="3.1.-.-" evidence="2"/>
<dbReference type="EMBL" id="DQ266099">
    <property type="protein sequence ID" value="ABB90272.1"/>
    <property type="molecule type" value="Genomic_RNA"/>
</dbReference>
<dbReference type="SMR" id="Q2VC91"/>
<dbReference type="Proteomes" id="UP000008576">
    <property type="component" value="Genome"/>
</dbReference>
<dbReference type="GO" id="GO:0030430">
    <property type="term" value="C:host cell cytoplasm"/>
    <property type="evidence" value="ECO:0007669"/>
    <property type="project" value="UniProtKB-SubCell"/>
</dbReference>
<dbReference type="GO" id="GO:0042025">
    <property type="term" value="C:host cell nucleus"/>
    <property type="evidence" value="ECO:0007669"/>
    <property type="project" value="UniProtKB-SubCell"/>
</dbReference>
<dbReference type="GO" id="GO:0004519">
    <property type="term" value="F:endonuclease activity"/>
    <property type="evidence" value="ECO:0007669"/>
    <property type="project" value="UniProtKB-KW"/>
</dbReference>
<dbReference type="GO" id="GO:0046872">
    <property type="term" value="F:metal ion binding"/>
    <property type="evidence" value="ECO:0007669"/>
    <property type="project" value="UniProtKB-KW"/>
</dbReference>
<dbReference type="GO" id="GO:0003723">
    <property type="term" value="F:RNA binding"/>
    <property type="evidence" value="ECO:0007669"/>
    <property type="project" value="UniProtKB-UniRule"/>
</dbReference>
<dbReference type="GO" id="GO:0075526">
    <property type="term" value="P:cap snatching"/>
    <property type="evidence" value="ECO:0007669"/>
    <property type="project" value="UniProtKB-UniRule"/>
</dbReference>
<dbReference type="GO" id="GO:0006351">
    <property type="term" value="P:DNA-templated transcription"/>
    <property type="evidence" value="ECO:0007669"/>
    <property type="project" value="UniProtKB-UniRule"/>
</dbReference>
<dbReference type="GO" id="GO:0039657">
    <property type="term" value="P:symbiont-mediated suppression of host gene expression"/>
    <property type="evidence" value="ECO:0007669"/>
    <property type="project" value="UniProtKB-KW"/>
</dbReference>
<dbReference type="GO" id="GO:0039523">
    <property type="term" value="P:symbiont-mediated suppression of host mRNA transcription via inhibition of RNA polymerase II activity"/>
    <property type="evidence" value="ECO:0007669"/>
    <property type="project" value="UniProtKB-UniRule"/>
</dbReference>
<dbReference type="GO" id="GO:0039694">
    <property type="term" value="P:viral RNA genome replication"/>
    <property type="evidence" value="ECO:0007669"/>
    <property type="project" value="InterPro"/>
</dbReference>
<dbReference type="GO" id="GO:0075523">
    <property type="term" value="P:viral translational frameshifting"/>
    <property type="evidence" value="ECO:0007669"/>
    <property type="project" value="UniProtKB-KW"/>
</dbReference>
<dbReference type="FunFam" id="3.40.91.90:FF:000001">
    <property type="entry name" value="Polymerase acidic protein"/>
    <property type="match status" value="1"/>
</dbReference>
<dbReference type="Gene3D" id="3.40.91.90">
    <property type="entry name" value="Influenza RNA-dependent RNA polymerase subunit PA, endonuclease domain"/>
    <property type="match status" value="1"/>
</dbReference>
<dbReference type="HAMAP" id="MF_04063">
    <property type="entry name" value="INFV_PA"/>
    <property type="match status" value="1"/>
</dbReference>
<dbReference type="InterPro" id="IPR037534">
    <property type="entry name" value="INFV_PA"/>
</dbReference>
<dbReference type="InterPro" id="IPR001009">
    <property type="entry name" value="PA/PA-X"/>
</dbReference>
<dbReference type="InterPro" id="IPR038372">
    <property type="entry name" value="PA/PA-X_sf"/>
</dbReference>
<dbReference type="Pfam" id="PF00603">
    <property type="entry name" value="Flu_PA"/>
    <property type="match status" value="1"/>
</dbReference>
<comment type="function">
    <text evidence="2">Plays an essential role in viral RNA transcription and replication by forming the heterotrimeric polymerase complex together with PB1 and PB2 subunits. The complex transcribes viral mRNAs by using a unique mechanism called cap-snatching. It consists in the hijacking and cleavage of host capped pre-mRNAs. These short capped RNAs are then used as primers for viral mRNAs. The PB2 subunit is responsible for the binding of the 5' cap of cellular pre-mRNAs which are subsequently cleaved after 10-13 nucleotides by the PA subunit that carries the endonuclease activity.</text>
</comment>
<comment type="cofactor">
    <cofactor evidence="2">
        <name>Mn(2+)</name>
        <dbReference type="ChEBI" id="CHEBI:29035"/>
    </cofactor>
    <text evidence="2">Binds 2 manganese ions per subunit.</text>
</comment>
<comment type="subunit">
    <text evidence="1 2">Influenza RNA polymerase is composed of three subunits: PB1, PB2 and PA. Interacts (via C-terminus) with PB1 (via N-terminus).</text>
</comment>
<comment type="subcellular location">
    <subcellularLocation>
        <location evidence="2">Host cytoplasm</location>
    </subcellularLocation>
    <subcellularLocation>
        <location evidence="2">Host nucleus</location>
    </subcellularLocation>
    <text evidence="1 2">PB1 and PA are transported in the host nucleus as a complex.</text>
</comment>
<comment type="alternative products">
    <event type="ribosomal frameshifting"/>
    <isoform>
        <id>Q2VC91-1</id>
        <name>PA</name>
        <sequence type="displayed"/>
    </isoform>
    <isoform>
        <id>P0DJU3-1</id>
        <name>PA-X</name>
        <sequence type="external"/>
    </isoform>
</comment>
<comment type="PTM">
    <text evidence="1 2">Phosphorylated on serines and threonines by host kinases, including human casein kinase II.</text>
</comment>
<comment type="miscellaneous">
    <text>SC35 was derived from A/Seal/Massachussetts/1/80 (H7N7) by serial passages in chicken embryo cells, thereby acquiring a multibasic cleavage site in its hemagglutinin (HA) and becoming 100% lethal for chickens. SC35 was then passaged 11 times in mouse lung, yielding the mouse-adapted variant SC35M.</text>
</comment>
<comment type="similarity">
    <text evidence="2">Belongs to the influenza viruses PA family.</text>
</comment>
<keyword id="KW-1157">Cap snatching</keyword>
<keyword id="KW-0255">Endonuclease</keyword>
<keyword id="KW-1262">Eukaryotic host gene expression shutoff by virus</keyword>
<keyword id="KW-1191">Eukaryotic host transcription shutoff by virus</keyword>
<keyword id="KW-1035">Host cytoplasm</keyword>
<keyword id="KW-1190">Host gene expression shutoff by virus</keyword>
<keyword id="KW-1048">Host nucleus</keyword>
<keyword id="KW-0945">Host-virus interaction</keyword>
<keyword id="KW-0378">Hydrolase</keyword>
<keyword id="KW-1104">Inhibition of host RNA polymerase II by virus</keyword>
<keyword id="KW-0464">Manganese</keyword>
<keyword id="KW-0479">Metal-binding</keyword>
<keyword id="KW-0540">Nuclease</keyword>
<keyword id="KW-0597">Phosphoprotein</keyword>
<keyword id="KW-0688">Ribosomal frameshifting</keyword>
<sequence>MEDFVRQCFNPMIVELAEKAMKEYGEDPKIETNKFAAICTHLEVCFMYSDFHFVDERGESIIVESGDPNALLKHRFEIIEGRDRTMAWTVVNSICNTTGIEKPKFLPDLYDYKENRFIEIGVTRREVHIYYLEKANKIKSEKTHIHIFSFTGEEMATKADYTLDEESRARIKTRLFTIRQEMASRGLWDSFRQSERGEETIEERFEITGTMRRLANQSLPPNFSSLENFRAYVDGFEPNGCIEGKLSQMSKEVNARIEPFLKTTPRPLRLPEGPPCSQRSKFLLMDALKLSIEDPSHEGEGIPLYDAIKCMKTFFGWKEPNIVKPHEKGINPNYLLAWKQVLAELQDIENEEKIPKTKNMKKTSQLKWALGENMAPEKVDFEDCKDVSDLKQYDSDEPEQRSLASWIQSEFNKACELTDSSWIELDEIGEDVAPIEHIASMRRNYFTAEVSRCRATEYIMKGVYINTALLNASSAAMDDFQLIPMISKCRTKEGRRKTNLYGFIIKGRSHLRNDTDVVNFVSMEFSLTDPRLEPHKWEKYCVLEIGDMLLRTAIGQVSRPMFLYVRTNGTSKIKMKWGMEMRRCLLQSLQQIESMIEAESSVKEKDMTKEFFENNSETWPIGESPKGVEEGSIGKVCRTLLAKSVFNSLYASPQLEGFSAESRKLLLIVQALRDNLEPGTFDLGGLYEAIEECLINDPWVLLNASWFNSFLTHALK</sequence>
<proteinExistence type="inferred from homology"/>
<accession>Q2VC91</accession>
<feature type="chain" id="PRO_0000279261" description="Polymerase acidic protein">
    <location>
        <begin position="1"/>
        <end position="716"/>
    </location>
</feature>
<feature type="short sequence motif" description="Nuclear localization signal 1 (NLS1)" evidence="1 2">
    <location>
        <begin position="124"/>
        <end position="139"/>
    </location>
</feature>
<feature type="short sequence motif" description="Nuclear localization signal 2 (NLS2)" evidence="1 2">
    <location>
        <begin position="184"/>
        <end position="247"/>
    </location>
</feature>
<feature type="binding site" evidence="2">
    <location>
        <position position="41"/>
    </location>
    <ligand>
        <name>Mn(2+)</name>
        <dbReference type="ChEBI" id="CHEBI:29035"/>
        <label>1</label>
    </ligand>
</feature>
<feature type="binding site" evidence="2">
    <location>
        <position position="80"/>
    </location>
    <ligand>
        <name>Mn(2+)</name>
        <dbReference type="ChEBI" id="CHEBI:29035"/>
        <label>2</label>
    </ligand>
</feature>
<feature type="binding site" evidence="2">
    <location>
        <position position="108"/>
    </location>
    <ligand>
        <name>Mn(2+)</name>
        <dbReference type="ChEBI" id="CHEBI:29035"/>
        <label>1</label>
    </ligand>
</feature>
<feature type="binding site" evidence="2">
    <location>
        <position position="108"/>
    </location>
    <ligand>
        <name>Mn(2+)</name>
        <dbReference type="ChEBI" id="CHEBI:29035"/>
        <label>2</label>
    </ligand>
</feature>
<feature type="binding site" evidence="2">
    <location>
        <position position="119"/>
    </location>
    <ligand>
        <name>Mn(2+)</name>
        <dbReference type="ChEBI" id="CHEBI:29035"/>
        <label>1</label>
    </ligand>
</feature>
<feature type="binding site" evidence="2">
    <location>
        <position position="120"/>
    </location>
    <ligand>
        <name>Mn(2+)</name>
        <dbReference type="ChEBI" id="CHEBI:29035"/>
        <label>1</label>
    </ligand>
</feature>
<organism>
    <name type="scientific">Influenza A virus (strain A/Seal/Massachusetts/1/1980 H7N7)</name>
    <dbReference type="NCBI Taxonomy" id="384493"/>
    <lineage>
        <taxon>Viruses</taxon>
        <taxon>Riboviria</taxon>
        <taxon>Orthornavirae</taxon>
        <taxon>Negarnaviricota</taxon>
        <taxon>Polyploviricotina</taxon>
        <taxon>Insthoviricetes</taxon>
        <taxon>Articulavirales</taxon>
        <taxon>Orthomyxoviridae</taxon>
        <taxon>Alphainfluenzavirus</taxon>
        <taxon>Alphainfluenzavirus influenzae</taxon>
        <taxon>Influenza A virus</taxon>
    </lineage>
</organism>
<evidence type="ECO:0000250" key="1">
    <source>
        <dbReference type="UniProtKB" id="P03433"/>
    </source>
</evidence>
<evidence type="ECO:0000255" key="2">
    <source>
        <dbReference type="HAMAP-Rule" id="MF_04063"/>
    </source>
</evidence>